<dbReference type="EMBL" id="AF245220">
    <property type="protein sequence ID" value="AAK28373.1"/>
    <property type="molecule type" value="mRNA"/>
</dbReference>
<dbReference type="EMBL" id="AF139576">
    <property type="protein sequence ID" value="AAK13588.1"/>
    <property type="molecule type" value="mRNA"/>
</dbReference>
<dbReference type="EMBL" id="AB014762">
    <property type="protein sequence ID" value="BAB87803.1"/>
    <property type="molecule type" value="mRNA"/>
</dbReference>
<dbReference type="EMBL" id="AK001009">
    <property type="protein sequence ID" value="BAA91466.1"/>
    <property type="molecule type" value="mRNA"/>
</dbReference>
<dbReference type="EMBL" id="CR457251">
    <property type="protein sequence ID" value="CAG33532.1"/>
    <property type="molecule type" value="mRNA"/>
</dbReference>
<dbReference type="EMBL" id="CH471052">
    <property type="protein sequence ID" value="EAW79730.1"/>
    <property type="molecule type" value="Genomic_DNA"/>
</dbReference>
<dbReference type="EMBL" id="BC009690">
    <property type="protein sequence ID" value="AAH09690.2"/>
    <property type="molecule type" value="mRNA"/>
</dbReference>
<dbReference type="EMBL" id="BC011899">
    <property type="protein sequence ID" value="AAH11899.1"/>
    <property type="molecule type" value="mRNA"/>
</dbReference>
<dbReference type="CCDS" id="CCDS2951.1"/>
<dbReference type="RefSeq" id="NP_060480.1">
    <property type="nucleotide sequence ID" value="NM_018010.4"/>
</dbReference>
<dbReference type="SMR" id="Q9NWB7"/>
<dbReference type="BioGRID" id="120396">
    <property type="interactions" value="90"/>
</dbReference>
<dbReference type="ComplexPortal" id="CPX-5022">
    <property type="entry name" value="Intraflagellar transport complex B"/>
</dbReference>
<dbReference type="CORUM" id="Q9NWB7"/>
<dbReference type="FunCoup" id="Q9NWB7">
    <property type="interactions" value="576"/>
</dbReference>
<dbReference type="IntAct" id="Q9NWB7">
    <property type="interactions" value="73"/>
</dbReference>
<dbReference type="MINT" id="Q9NWB7"/>
<dbReference type="STRING" id="9606.ENSP00000264538"/>
<dbReference type="iPTMnet" id="Q9NWB7"/>
<dbReference type="PhosphoSitePlus" id="Q9NWB7"/>
<dbReference type="BioMuta" id="IFT57"/>
<dbReference type="DMDM" id="74734638"/>
<dbReference type="jPOST" id="Q9NWB7"/>
<dbReference type="MassIVE" id="Q9NWB7"/>
<dbReference type="PaxDb" id="9606-ENSP00000264538"/>
<dbReference type="PeptideAtlas" id="Q9NWB7"/>
<dbReference type="ProteomicsDB" id="82925"/>
<dbReference type="Pumba" id="Q9NWB7"/>
<dbReference type="Antibodypedia" id="32363">
    <property type="antibodies" value="314 antibodies from 33 providers"/>
</dbReference>
<dbReference type="DNASU" id="55081"/>
<dbReference type="Ensembl" id="ENST00000264538.4">
    <property type="protein sequence ID" value="ENSP00000264538.3"/>
    <property type="gene ID" value="ENSG00000114446.5"/>
</dbReference>
<dbReference type="GeneID" id="55081"/>
<dbReference type="KEGG" id="hsa:55081"/>
<dbReference type="MANE-Select" id="ENST00000264538.4">
    <property type="protein sequence ID" value="ENSP00000264538.3"/>
    <property type="RefSeq nucleotide sequence ID" value="NM_018010.4"/>
    <property type="RefSeq protein sequence ID" value="NP_060480.1"/>
</dbReference>
<dbReference type="UCSC" id="uc003dwx.4">
    <property type="organism name" value="human"/>
</dbReference>
<dbReference type="AGR" id="HGNC:17367"/>
<dbReference type="CTD" id="55081"/>
<dbReference type="DisGeNET" id="55081"/>
<dbReference type="GeneCards" id="IFT57"/>
<dbReference type="HGNC" id="HGNC:17367">
    <property type="gene designation" value="IFT57"/>
</dbReference>
<dbReference type="HPA" id="ENSG00000114446">
    <property type="expression patterns" value="Low tissue specificity"/>
</dbReference>
<dbReference type="MalaCards" id="IFT57"/>
<dbReference type="MIM" id="606621">
    <property type="type" value="gene"/>
</dbReference>
<dbReference type="MIM" id="617927">
    <property type="type" value="phenotype"/>
</dbReference>
<dbReference type="neXtProt" id="NX_Q9NWB7"/>
<dbReference type="OpenTargets" id="ENSG00000114446"/>
<dbReference type="Orphanet" id="508501">
    <property type="disease" value="Oral-facial-digital syndrome with short stature and brachymesophalangy"/>
</dbReference>
<dbReference type="PharmGKB" id="PA27890"/>
<dbReference type="VEuPathDB" id="HostDB:ENSG00000114446"/>
<dbReference type="eggNOG" id="KOG0972">
    <property type="taxonomic scope" value="Eukaryota"/>
</dbReference>
<dbReference type="GeneTree" id="ENSGT00390000006307"/>
<dbReference type="HOGENOM" id="CLU_039132_0_0_1"/>
<dbReference type="InParanoid" id="Q9NWB7"/>
<dbReference type="OMA" id="VHAHDQD"/>
<dbReference type="OrthoDB" id="423881at2759"/>
<dbReference type="PAN-GO" id="Q9NWB7">
    <property type="GO annotations" value="6 GO annotations based on evolutionary models"/>
</dbReference>
<dbReference type="PhylomeDB" id="Q9NWB7"/>
<dbReference type="TreeFam" id="TF106156"/>
<dbReference type="PathwayCommons" id="Q9NWB7"/>
<dbReference type="Reactome" id="R-HSA-5610787">
    <property type="pathway name" value="Hedgehog 'off' state"/>
</dbReference>
<dbReference type="Reactome" id="R-HSA-5620924">
    <property type="pathway name" value="Intraflagellar transport"/>
</dbReference>
<dbReference type="SignaLink" id="Q9NWB7"/>
<dbReference type="BioGRID-ORCS" id="55081">
    <property type="hits" value="17 hits in 1149 CRISPR screens"/>
</dbReference>
<dbReference type="ChiTaRS" id="IFT57">
    <property type="organism name" value="human"/>
</dbReference>
<dbReference type="GeneWiki" id="IFT57"/>
<dbReference type="GenomeRNAi" id="55081"/>
<dbReference type="Pharos" id="Q9NWB7">
    <property type="development level" value="Tbio"/>
</dbReference>
<dbReference type="PRO" id="PR:Q9NWB7"/>
<dbReference type="Proteomes" id="UP000005640">
    <property type="component" value="Chromosome 3"/>
</dbReference>
<dbReference type="RNAct" id="Q9NWB7">
    <property type="molecule type" value="protein"/>
</dbReference>
<dbReference type="Bgee" id="ENSG00000114446">
    <property type="expression patterns" value="Expressed in bronchial epithelial cell and 199 other cell types or tissues"/>
</dbReference>
<dbReference type="ExpressionAtlas" id="Q9NWB7">
    <property type="expression patterns" value="baseline and differential"/>
</dbReference>
<dbReference type="GO" id="GO:0005930">
    <property type="term" value="C:axoneme"/>
    <property type="evidence" value="ECO:0007669"/>
    <property type="project" value="Ensembl"/>
</dbReference>
<dbReference type="GO" id="GO:0005813">
    <property type="term" value="C:centrosome"/>
    <property type="evidence" value="ECO:0007669"/>
    <property type="project" value="Ensembl"/>
</dbReference>
<dbReference type="GO" id="GO:0036064">
    <property type="term" value="C:ciliary basal body"/>
    <property type="evidence" value="ECO:0000250"/>
    <property type="project" value="UniProtKB"/>
</dbReference>
<dbReference type="GO" id="GO:0097546">
    <property type="term" value="C:ciliary base"/>
    <property type="evidence" value="ECO:0000314"/>
    <property type="project" value="UniProtKB"/>
</dbReference>
<dbReference type="GO" id="GO:0097542">
    <property type="term" value="C:ciliary tip"/>
    <property type="evidence" value="ECO:0000304"/>
    <property type="project" value="Reactome"/>
</dbReference>
<dbReference type="GO" id="GO:0005929">
    <property type="term" value="C:cilium"/>
    <property type="evidence" value="ECO:0000318"/>
    <property type="project" value="GO_Central"/>
</dbReference>
<dbReference type="GO" id="GO:0044292">
    <property type="term" value="C:dendrite terminus"/>
    <property type="evidence" value="ECO:0007669"/>
    <property type="project" value="Ensembl"/>
</dbReference>
<dbReference type="GO" id="GO:0005794">
    <property type="term" value="C:Golgi apparatus"/>
    <property type="evidence" value="ECO:0000318"/>
    <property type="project" value="GO_Central"/>
</dbReference>
<dbReference type="GO" id="GO:0030992">
    <property type="term" value="C:intraciliary transport particle B"/>
    <property type="evidence" value="ECO:0000353"/>
    <property type="project" value="ComplexPortal"/>
</dbReference>
<dbReference type="GO" id="GO:0005815">
    <property type="term" value="C:microtubule organizing center"/>
    <property type="evidence" value="ECO:0000318"/>
    <property type="project" value="GO_Central"/>
</dbReference>
<dbReference type="GO" id="GO:0032391">
    <property type="term" value="C:photoreceptor connecting cilium"/>
    <property type="evidence" value="ECO:0000314"/>
    <property type="project" value="UniProtKB"/>
</dbReference>
<dbReference type="GO" id="GO:0003677">
    <property type="term" value="F:DNA binding"/>
    <property type="evidence" value="ECO:0007669"/>
    <property type="project" value="UniProtKB-KW"/>
</dbReference>
<dbReference type="GO" id="GO:0006915">
    <property type="term" value="P:apoptotic process"/>
    <property type="evidence" value="ECO:0000314"/>
    <property type="project" value="MGI"/>
</dbReference>
<dbReference type="GO" id="GO:0060271">
    <property type="term" value="P:cilium assembly"/>
    <property type="evidence" value="ECO:0000303"/>
    <property type="project" value="ComplexPortal"/>
</dbReference>
<dbReference type="GO" id="GO:0001947">
    <property type="term" value="P:heart looping"/>
    <property type="evidence" value="ECO:0007669"/>
    <property type="project" value="Ensembl"/>
</dbReference>
<dbReference type="GO" id="GO:0035720">
    <property type="term" value="P:intraciliary anterograde transport"/>
    <property type="evidence" value="ECO:0000303"/>
    <property type="project" value="ComplexPortal"/>
</dbReference>
<dbReference type="GO" id="GO:0042073">
    <property type="term" value="P:intraciliary transport"/>
    <property type="evidence" value="ECO:0000318"/>
    <property type="project" value="GO_Central"/>
</dbReference>
<dbReference type="GO" id="GO:0043616">
    <property type="term" value="P:keratinocyte proliferation"/>
    <property type="evidence" value="ECO:0007669"/>
    <property type="project" value="Ensembl"/>
</dbReference>
<dbReference type="GO" id="GO:0044458">
    <property type="term" value="P:motile cilium assembly"/>
    <property type="evidence" value="ECO:0007669"/>
    <property type="project" value="Ensembl"/>
</dbReference>
<dbReference type="GO" id="GO:0010839">
    <property type="term" value="P:negative regulation of keratinocyte proliferation"/>
    <property type="evidence" value="ECO:0007669"/>
    <property type="project" value="Ensembl"/>
</dbReference>
<dbReference type="GO" id="GO:0001843">
    <property type="term" value="P:neural tube closure"/>
    <property type="evidence" value="ECO:0007669"/>
    <property type="project" value="Ensembl"/>
</dbReference>
<dbReference type="GO" id="GO:1905515">
    <property type="term" value="P:non-motile cilium assembly"/>
    <property type="evidence" value="ECO:0000318"/>
    <property type="project" value="GO_Central"/>
</dbReference>
<dbReference type="GO" id="GO:0042981">
    <property type="term" value="P:regulation of apoptotic process"/>
    <property type="evidence" value="ECO:0000314"/>
    <property type="project" value="MGI"/>
</dbReference>
<dbReference type="GO" id="GO:0007224">
    <property type="term" value="P:smoothened signaling pathway"/>
    <property type="evidence" value="ECO:0007669"/>
    <property type="project" value="Ensembl"/>
</dbReference>
<dbReference type="InterPro" id="IPR019530">
    <property type="entry name" value="Intra-flagellar_transport_57"/>
</dbReference>
<dbReference type="PANTHER" id="PTHR16011">
    <property type="entry name" value="IFT57/HIPPI"/>
    <property type="match status" value="1"/>
</dbReference>
<dbReference type="PANTHER" id="PTHR16011:SF0">
    <property type="entry name" value="INTRAFLAGELLAR TRANSPORT PROTEIN 57 HOMOLOG"/>
    <property type="match status" value="1"/>
</dbReference>
<dbReference type="Pfam" id="PF10498">
    <property type="entry name" value="IFT57"/>
    <property type="match status" value="1"/>
</dbReference>
<evidence type="ECO:0000250" key="1"/>
<evidence type="ECO:0000250" key="2">
    <source>
        <dbReference type="UniProtKB" id="Q5EA95"/>
    </source>
</evidence>
<evidence type="ECO:0000250" key="3">
    <source>
        <dbReference type="UniProtKB" id="Q8BXG3"/>
    </source>
</evidence>
<evidence type="ECO:0000255" key="4"/>
<evidence type="ECO:0000269" key="5">
    <source>
    </source>
</evidence>
<evidence type="ECO:0000269" key="6">
    <source>
    </source>
</evidence>
<evidence type="ECO:0000269" key="7">
    <source>
    </source>
</evidence>
<evidence type="ECO:0000269" key="8">
    <source>
    </source>
</evidence>
<evidence type="ECO:0000269" key="9">
    <source>
    </source>
</evidence>
<evidence type="ECO:0000269" key="10">
    <source>
    </source>
</evidence>
<evidence type="ECO:0000269" key="11">
    <source>
    </source>
</evidence>
<evidence type="ECO:0000269" key="12">
    <source>
    </source>
</evidence>
<evidence type="ECO:0000305" key="13"/>
<protein>
    <recommendedName>
        <fullName>Intraflagellar transport protein 57 homolog</fullName>
    </recommendedName>
    <alternativeName>
        <fullName>Dermal papilla-derived protein 8</fullName>
    </alternativeName>
    <alternativeName>
        <fullName>Estrogen-related receptor beta-like protein 1</fullName>
    </alternativeName>
    <alternativeName>
        <fullName>HIP1-interacting protein</fullName>
    </alternativeName>
    <alternativeName>
        <fullName>MHS4R2</fullName>
    </alternativeName>
</protein>
<reference key="1">
    <citation type="journal article" date="2002" name="Nat. Cell Biol.">
        <title>Recruitment and activation of caspase-8 by the Huntingtin-interacting protein Hip-1 and a novel partner Hippi.</title>
        <authorList>
            <person name="Gervais F.G."/>
            <person name="Singaraja R."/>
            <person name="Xanthoudakis S."/>
            <person name="Gutekunst C.-A."/>
            <person name="Leavitt B.R."/>
            <person name="Metzler M."/>
            <person name="Hackam A.S."/>
            <person name="Tam J."/>
            <person name="Vaillancourt J.P."/>
            <person name="Houtzager V."/>
            <person name="Rasper D.M."/>
            <person name="Roy S."/>
            <person name="Hayden M.R."/>
            <person name="Nicholson D.W."/>
        </authorList>
    </citation>
    <scope>NUCLEOTIDE SEQUENCE [MRNA]</scope>
    <scope>FUNCTION</scope>
    <scope>TISSUE SPECIFICITY</scope>
    <scope>INTERACTION WITH HIP1</scope>
    <scope>MUTAGENESIS OF LYS-409</scope>
</reference>
<reference key="2">
    <citation type="submission" date="1999-03" db="EMBL/GenBank/DDBJ databases">
        <title>Analysis of the coding capacity of the MHS4 critical region on chromosome 3q13.1.</title>
        <authorList>
            <person name="Pasutto F."/>
            <person name="Schickel J."/>
            <person name="Deufel T."/>
            <person name="Rohe M."/>
        </authorList>
    </citation>
    <scope>NUCLEOTIDE SEQUENCE [MRNA]</scope>
    <source>
        <tissue>Testis</tissue>
    </source>
</reference>
<reference key="3">
    <citation type="submission" date="1998-05" db="EMBL/GenBank/DDBJ databases">
        <title>Molecular cloning of a dermal papilla derived gene.</title>
        <authorList>
            <person name="Ikeda A."/>
            <person name="Ukai Y."/>
            <person name="Yamashita M."/>
            <person name="Yoshimoto M."/>
        </authorList>
    </citation>
    <scope>NUCLEOTIDE SEQUENCE [MRNA]</scope>
</reference>
<reference key="4">
    <citation type="journal article" date="2004" name="Nat. Genet.">
        <title>Complete sequencing and characterization of 21,243 full-length human cDNAs.</title>
        <authorList>
            <person name="Ota T."/>
            <person name="Suzuki Y."/>
            <person name="Nishikawa T."/>
            <person name="Otsuki T."/>
            <person name="Sugiyama T."/>
            <person name="Irie R."/>
            <person name="Wakamatsu A."/>
            <person name="Hayashi K."/>
            <person name="Sato H."/>
            <person name="Nagai K."/>
            <person name="Kimura K."/>
            <person name="Makita H."/>
            <person name="Sekine M."/>
            <person name="Obayashi M."/>
            <person name="Nishi T."/>
            <person name="Shibahara T."/>
            <person name="Tanaka T."/>
            <person name="Ishii S."/>
            <person name="Yamamoto J."/>
            <person name="Saito K."/>
            <person name="Kawai Y."/>
            <person name="Isono Y."/>
            <person name="Nakamura Y."/>
            <person name="Nagahari K."/>
            <person name="Murakami K."/>
            <person name="Yasuda T."/>
            <person name="Iwayanagi T."/>
            <person name="Wagatsuma M."/>
            <person name="Shiratori A."/>
            <person name="Sudo H."/>
            <person name="Hosoiri T."/>
            <person name="Kaku Y."/>
            <person name="Kodaira H."/>
            <person name="Kondo H."/>
            <person name="Sugawara M."/>
            <person name="Takahashi M."/>
            <person name="Kanda K."/>
            <person name="Yokoi T."/>
            <person name="Furuya T."/>
            <person name="Kikkawa E."/>
            <person name="Omura Y."/>
            <person name="Abe K."/>
            <person name="Kamihara K."/>
            <person name="Katsuta N."/>
            <person name="Sato K."/>
            <person name="Tanikawa M."/>
            <person name="Yamazaki M."/>
            <person name="Ninomiya K."/>
            <person name="Ishibashi T."/>
            <person name="Yamashita H."/>
            <person name="Murakawa K."/>
            <person name="Fujimori K."/>
            <person name="Tanai H."/>
            <person name="Kimata M."/>
            <person name="Watanabe M."/>
            <person name="Hiraoka S."/>
            <person name="Chiba Y."/>
            <person name="Ishida S."/>
            <person name="Ono Y."/>
            <person name="Takiguchi S."/>
            <person name="Watanabe S."/>
            <person name="Yosida M."/>
            <person name="Hotuta T."/>
            <person name="Kusano J."/>
            <person name="Kanehori K."/>
            <person name="Takahashi-Fujii A."/>
            <person name="Hara H."/>
            <person name="Tanase T.-O."/>
            <person name="Nomura Y."/>
            <person name="Togiya S."/>
            <person name="Komai F."/>
            <person name="Hara R."/>
            <person name="Takeuchi K."/>
            <person name="Arita M."/>
            <person name="Imose N."/>
            <person name="Musashino K."/>
            <person name="Yuuki H."/>
            <person name="Oshima A."/>
            <person name="Sasaki N."/>
            <person name="Aotsuka S."/>
            <person name="Yoshikawa Y."/>
            <person name="Matsunawa H."/>
            <person name="Ichihara T."/>
            <person name="Shiohata N."/>
            <person name="Sano S."/>
            <person name="Moriya S."/>
            <person name="Momiyama H."/>
            <person name="Satoh N."/>
            <person name="Takami S."/>
            <person name="Terashima Y."/>
            <person name="Suzuki O."/>
            <person name="Nakagawa S."/>
            <person name="Senoh A."/>
            <person name="Mizoguchi H."/>
            <person name="Goto Y."/>
            <person name="Shimizu F."/>
            <person name="Wakebe H."/>
            <person name="Hishigaki H."/>
            <person name="Watanabe T."/>
            <person name="Sugiyama A."/>
            <person name="Takemoto M."/>
            <person name="Kawakami B."/>
            <person name="Yamazaki M."/>
            <person name="Watanabe K."/>
            <person name="Kumagai A."/>
            <person name="Itakura S."/>
            <person name="Fukuzumi Y."/>
            <person name="Fujimori Y."/>
            <person name="Komiyama M."/>
            <person name="Tashiro H."/>
            <person name="Tanigami A."/>
            <person name="Fujiwara T."/>
            <person name="Ono T."/>
            <person name="Yamada K."/>
            <person name="Fujii Y."/>
            <person name="Ozaki K."/>
            <person name="Hirao M."/>
            <person name="Ohmori Y."/>
            <person name="Kawabata A."/>
            <person name="Hikiji T."/>
            <person name="Kobatake N."/>
            <person name="Inagaki H."/>
            <person name="Ikema Y."/>
            <person name="Okamoto S."/>
            <person name="Okitani R."/>
            <person name="Kawakami T."/>
            <person name="Noguchi S."/>
            <person name="Itoh T."/>
            <person name="Shigeta K."/>
            <person name="Senba T."/>
            <person name="Matsumura K."/>
            <person name="Nakajima Y."/>
            <person name="Mizuno T."/>
            <person name="Morinaga M."/>
            <person name="Sasaki M."/>
            <person name="Togashi T."/>
            <person name="Oyama M."/>
            <person name="Hata H."/>
            <person name="Watanabe M."/>
            <person name="Komatsu T."/>
            <person name="Mizushima-Sugano J."/>
            <person name="Satoh T."/>
            <person name="Shirai Y."/>
            <person name="Takahashi Y."/>
            <person name="Nakagawa K."/>
            <person name="Okumura K."/>
            <person name="Nagase T."/>
            <person name="Nomura N."/>
            <person name="Kikuchi H."/>
            <person name="Masuho Y."/>
            <person name="Yamashita R."/>
            <person name="Nakai K."/>
            <person name="Yada T."/>
            <person name="Nakamura Y."/>
            <person name="Ohara O."/>
            <person name="Isogai T."/>
            <person name="Sugano S."/>
        </authorList>
    </citation>
    <scope>NUCLEOTIDE SEQUENCE [LARGE SCALE MRNA]</scope>
    <source>
        <tissue>Embryo</tissue>
    </source>
</reference>
<reference key="5">
    <citation type="submission" date="2004-06" db="EMBL/GenBank/DDBJ databases">
        <title>Cloning of human full open reading frames in Gateway(TM) system entry vector (pDONR201).</title>
        <authorList>
            <person name="Ebert L."/>
            <person name="Schick M."/>
            <person name="Neubert P."/>
            <person name="Schatten R."/>
            <person name="Henze S."/>
            <person name="Korn B."/>
        </authorList>
    </citation>
    <scope>NUCLEOTIDE SEQUENCE [LARGE SCALE MRNA]</scope>
</reference>
<reference key="6">
    <citation type="submission" date="2005-09" db="EMBL/GenBank/DDBJ databases">
        <authorList>
            <person name="Mural R.J."/>
            <person name="Istrail S."/>
            <person name="Sutton G.G."/>
            <person name="Florea L."/>
            <person name="Halpern A.L."/>
            <person name="Mobarry C.M."/>
            <person name="Lippert R."/>
            <person name="Walenz B."/>
            <person name="Shatkay H."/>
            <person name="Dew I."/>
            <person name="Miller J.R."/>
            <person name="Flanigan M.J."/>
            <person name="Edwards N.J."/>
            <person name="Bolanos R."/>
            <person name="Fasulo D."/>
            <person name="Halldorsson B.V."/>
            <person name="Hannenhalli S."/>
            <person name="Turner R."/>
            <person name="Yooseph S."/>
            <person name="Lu F."/>
            <person name="Nusskern D.R."/>
            <person name="Shue B.C."/>
            <person name="Zheng X.H."/>
            <person name="Zhong F."/>
            <person name="Delcher A.L."/>
            <person name="Huson D.H."/>
            <person name="Kravitz S.A."/>
            <person name="Mouchard L."/>
            <person name="Reinert K."/>
            <person name="Remington K.A."/>
            <person name="Clark A.G."/>
            <person name="Waterman M.S."/>
            <person name="Eichler E.E."/>
            <person name="Adams M.D."/>
            <person name="Hunkapiller M.W."/>
            <person name="Myers E.W."/>
            <person name="Venter J.C."/>
        </authorList>
    </citation>
    <scope>NUCLEOTIDE SEQUENCE [LARGE SCALE GENOMIC DNA]</scope>
</reference>
<reference key="7">
    <citation type="journal article" date="2004" name="Genome Res.">
        <title>The status, quality, and expansion of the NIH full-length cDNA project: the Mammalian Gene Collection (MGC).</title>
        <authorList>
            <consortium name="The MGC Project Team"/>
        </authorList>
    </citation>
    <scope>NUCLEOTIDE SEQUENCE [LARGE SCALE MRNA]</scope>
    <source>
        <tissue>Lung</tissue>
        <tissue>Uterus</tissue>
    </source>
</reference>
<reference key="8">
    <citation type="journal article" date="2003" name="Biochem. Biophys. Res. Commun.">
        <title>The viral death protein Apoptin interacts with Hippi, the protein interactor of Huntingtin-interacting protein 1.</title>
        <authorList>
            <person name="Cheng C.-M."/>
            <person name="Huang S.-P."/>
            <person name="Chang Y.-F."/>
            <person name="Chung W.-Y."/>
            <person name="Yuo C.-Y."/>
        </authorList>
    </citation>
    <scope>INTERACTION WITH CHICKEN ANEMIA VIRUS APOPTIN</scope>
</reference>
<reference key="9">
    <citation type="journal article" date="2003" name="Cell Death Differ.">
        <title>Bifunctional apoptosis inhibitor (BAR) protects neurons from diverse cell death pathways.</title>
        <authorList>
            <person name="Roth W."/>
            <person name="Kermer P."/>
            <person name="Krajewska M."/>
            <person name="Welsh K."/>
            <person name="Davis S."/>
            <person name="Krajewski S."/>
            <person name="Reed J.C."/>
        </authorList>
    </citation>
    <scope>INTERACTION WITH BFAR</scope>
</reference>
<reference key="10">
    <citation type="journal article" date="2007" name="Biochem. Biophys. Res. Commun.">
        <title>Homer1c interacts with Hippi and protects striatal neurons from apoptosis.</title>
        <authorList>
            <person name="Sakamoto K."/>
            <person name="Yoshida S."/>
            <person name="Ikegami K."/>
            <person name="Minakami R."/>
            <person name="Kato A."/>
            <person name="Udo H."/>
            <person name="Sugiyama H."/>
        </authorList>
    </citation>
    <scope>FUNCTION</scope>
</reference>
<reference key="11">
    <citation type="journal article" date="2007" name="Biochem. Biophys. Res. Commun.">
        <title>Interaction of HIPPI with putative promoter sequence of caspase-1 in vitro and in vivo.</title>
        <authorList>
            <person name="Majumder P."/>
            <person name="Chattopadhyay B."/>
            <person name="Sukanya S."/>
            <person name="Ray T."/>
            <person name="Banerjee M."/>
            <person name="Mukhopadhyay D."/>
            <person name="Bhattacharyya N.P."/>
        </authorList>
    </citation>
    <scope>DNA-BINDING</scope>
</reference>
<reference key="12">
    <citation type="journal article" date="2007" name="FEBS J.">
        <title>Interactions of HIPPI, a molecular partner of Huntingtin interacting protein HIP1, with the specific motif present at the putative promoter sequence of the caspase-1, caspase-8 and caspase-10 genes.</title>
        <authorList>
            <person name="Majumder P."/>
            <person name="Choudhury A."/>
            <person name="Banerjee M."/>
            <person name="Lahiri A."/>
            <person name="Bhattacharyya N.P."/>
        </authorList>
    </citation>
    <scope>FUNCTION</scope>
    <scope>DNA-BINDING</scope>
</reference>
<reference key="13">
    <citation type="journal article" date="2015" name="PLoS ONE">
        <title>Characterization of tetratricopeptide repeat-containing proteins critical for cilia formation and function.</title>
        <authorList>
            <person name="Xu Y."/>
            <person name="Cao J."/>
            <person name="Huang S."/>
            <person name="Feng D."/>
            <person name="Zhang W."/>
            <person name="Zhu X."/>
            <person name="Yan X."/>
        </authorList>
    </citation>
    <scope>INTERACTION WITH TTC25</scope>
</reference>
<reference key="14">
    <citation type="journal article" date="2016" name="Clin. Genet.">
        <title>Autosomal recessive IFT57 hypomorphic mutation cause ciliary transport defect in unclassified oral-facial-digital syndrome with short stature and brachymesophalangia.</title>
        <authorList>
            <person name="Thevenon J."/>
            <person name="Duplomb L."/>
            <person name="Phadke S."/>
            <person name="Eguether T."/>
            <person name="Saunier A."/>
            <person name="Avila M."/>
            <person name="Carmignac V."/>
            <person name="Bruel A.L."/>
            <person name="St-Onge J."/>
            <person name="Duffourd Y."/>
            <person name="Pazour G.J."/>
            <person name="Franco B."/>
            <person name="Attie-Bitach T."/>
            <person name="Masurel-Paulet A."/>
            <person name="Riviere J.B."/>
            <person name="Cormier-Daire V."/>
            <person name="Philippe C."/>
            <person name="Faivre L."/>
            <person name="Thauvin-Robinet C."/>
        </authorList>
    </citation>
    <scope>INVOLVEMENT IN OFD18</scope>
</reference>
<reference key="15">
    <citation type="journal article" date="2019" name="Front. Cell Dev. Biol.">
        <title>SANS (USH1G) Molecularly Links the Human Usher Syndrome Protein Network to the Intraflagellar Transport Module by Direct Binding to IFT-B Proteins.</title>
        <authorList>
            <person name="Sorusch N."/>
            <person name="Yildirim A."/>
            <person name="Knapp B."/>
            <person name="Janson J."/>
            <person name="Fleck W."/>
            <person name="Scharf C."/>
            <person name="Wolfrum U."/>
        </authorList>
    </citation>
    <scope>INTERACTION WITH USH1G</scope>
</reference>
<comment type="function">
    <text evidence="1 5 8 9">Required for the formation of cilia. Plays an indirect role in sonic hedgehog signaling, cilia being required for all activity of the hedgehog pathway (By similarity). Has pro-apoptotic function via its interaction with HIP1, leading to recruit caspase-8 (CASP8) and trigger apoptosis. Has the ability to bind DNA sequence motif 5'-AAAGACATG-3' present in the promoter of caspase genes such as CASP1, CASP8 and CASP10, suggesting that it may act as a transcription regulator; however the relevance of such function remains unclear.</text>
</comment>
<comment type="subunit">
    <text evidence="3 5 6 7 10 12">Component of the IFT complex B, at least composed of IFT20, IFT22, IFT25, IFT27, IFT46, IFT52, TRAF3IP1/IFT54, IFT57, IFT74, IFT80, IFT81, and IFT88 (By similarity). Interacts with IFT20 (By similarity). Interacts with IFT88 (By similarity). Interacts with IFT80, IFT-81, IFT74, IFT172, IFT70B and KIF17 (By similarity). Interacts with BLOC1S2 (By similarity). Interacts with RYBP (By similarity). Interacts with HOMER1; the interaction possibly prevents the pro-apoptotic effects of IFT57 (By similarity). Interacts with HIP1 (PubMed:11788820). In normal conditions, it poorly interacts with HIP1, HIP1 being strongly associated with HTT (PubMed:11788820). However, in mutant HTT proteins with a long poly-Gln region, interaction between HTT and HIP1 is inhibited, promoting the interaction between HIP1 and IFT57, leading to apoptosis (PubMed:11788820). Interacts with BFAR (PubMed:14502241). Interacts with TTC25 (PubMed:25860617). Interacts with USH1G (PubMed:31637240). Interacts with chicken anemia virus protein apoptin (PubMed:12745083).</text>
</comment>
<comment type="interaction">
    <interactant intactId="EBI-725672">
        <id>Q9NWB7</id>
    </interactant>
    <interactant intactId="EBI-465872">
        <id>Q6QNY1</id>
        <label>BLOC1S2</label>
    </interactant>
    <organismsDiffer>false</organismsDiffer>
    <experiments>3</experiments>
</comment>
<comment type="interaction">
    <interactant intactId="EBI-725672">
        <id>Q9NWB7</id>
    </interactant>
    <interactant intactId="EBI-949824">
        <id>O00471</id>
        <label>EXOC5</label>
    </interactant>
    <organismsDiffer>false</organismsDiffer>
    <experiments>3</experiments>
</comment>
<comment type="interaction">
    <interactant intactId="EBI-725672">
        <id>Q9NWB7</id>
    </interactant>
    <interactant intactId="EBI-466029">
        <id>P42858</id>
        <label>HTT</label>
    </interactant>
    <organismsDiffer>false</organismsDiffer>
    <experiments>3</experiments>
</comment>
<comment type="interaction">
    <interactant intactId="EBI-725672">
        <id>Q9NWB7</id>
    </interactant>
    <interactant intactId="EBI-9091197">
        <id>Q8IY31-3</id>
        <label>IFT20</label>
    </interactant>
    <organismsDiffer>false</organismsDiffer>
    <experiments>3</experiments>
</comment>
<comment type="interaction">
    <interactant intactId="EBI-725672">
        <id>Q9NWB7</id>
    </interactant>
    <interactant intactId="EBI-1773994">
        <id>Q8WVK7</id>
        <label>SKA2</label>
    </interactant>
    <organismsDiffer>false</organismsDiffer>
    <experiments>3</experiments>
</comment>
<comment type="interaction">
    <interactant intactId="EBI-725672">
        <id>Q9NWB7</id>
    </interactant>
    <interactant intactId="EBI-12111538">
        <id>Q8IY57-5</id>
        <label>YAF2</label>
    </interactant>
    <organismsDiffer>false</organismsDiffer>
    <experiments>3</experiments>
</comment>
<comment type="interaction">
    <interactant intactId="EBI-725672">
        <id>Q9NWB7</id>
    </interactant>
    <interactant intactId="EBI-524753">
        <id>Q8IUH5</id>
        <label>ZDHHC17</label>
    </interactant>
    <organismsDiffer>false</organismsDiffer>
    <experiments>2</experiments>
</comment>
<comment type="subcellular location">
    <subcellularLocation>
        <location evidence="3">Cell projection</location>
        <location evidence="3">Cilium</location>
    </subcellularLocation>
    <subcellularLocation>
        <location evidence="2">Cytoplasm</location>
        <location evidence="2">Cytoskeleton</location>
        <location evidence="2">Cilium basal body</location>
    </subcellularLocation>
    <text evidence="1">Concentrates within the inner segment of cilia.</text>
</comment>
<comment type="tissue specificity">
    <text evidence="5">Present in many tissues such as brain, thymus, lymph node, lung, liver, skin and kidney (at protein level).</text>
</comment>
<comment type="domain">
    <text>The pseudo DED region (pDED) mediates the interaction with HIP1.</text>
</comment>
<comment type="disease" evidence="11">
    <disease id="DI-05224">
        <name>Orofaciodigital syndrome 18</name>
        <acronym>OFD18</acronym>
        <description>A form of orofaciodigital syndrome, a group of heterogeneous disorders characterized by malformations of the oral cavity, face and digits, and associated phenotypic abnormalities that lead to the delineation of various subtypes. OFD18 is an autosomal recessive form characterized by short stature, brachymesophalangy, pre- and postaxial polysyndactyly, and stocky femoral necks, as well as oral anomalies and dysmorphic facial features.</description>
        <dbReference type="MIM" id="617927"/>
    </disease>
    <text>The disease is caused by variants affecting the gene represented in this entry.</text>
</comment>
<comment type="similarity">
    <text evidence="13">Belongs to the IFT57 family.</text>
</comment>
<accession>Q9NWB7</accession>
<accession>Q96DA9</accession>
<feature type="chain" id="PRO_0000328884" description="Intraflagellar transport protein 57 homolog">
    <location>
        <begin position="1"/>
        <end position="429"/>
    </location>
</feature>
<feature type="region of interest" description="pDED">
    <location>
        <begin position="335"/>
        <end position="426"/>
    </location>
</feature>
<feature type="coiled-coil region" evidence="4">
    <location>
        <begin position="304"/>
        <end position="369"/>
    </location>
</feature>
<feature type="mutagenesis site" description="Impairs the interaction with HIP1." evidence="5">
    <original>K</original>
    <variation>D</variation>
    <location>
        <position position="409"/>
    </location>
</feature>
<feature type="sequence conflict" description="In Ref. 7; AAH09690." evidence="13" ref="7">
    <original>I</original>
    <variation>V</variation>
    <location>
        <position position="293"/>
    </location>
</feature>
<sequence>MTAALAVVTTSGLEDGVPRSRGEGTGEVVLERGPGAAYHMFVVMEDLVEKLKLLRYEEEFLRKSNLKAPSRHYFALPTNPGEQFYMFCTLAAWLINKAGRPFEQPQEYDDPNATISNILSELRSFGRTADFPPSKLKSGYGEHVCYVLDCFAEEALKYIGFTWKRPIYPVEELEEESVAEDDAELTLNKVDEEFVEEETDNEENFIDLNVLKAQTYHLDMNETAKQEDILESTTDAAEWSLEVERVLPQLKVTIRTDNKDWRIHVDQMHQHRSGIESALKETKGFLDKLHNEITRTLEKISSREKYINNQLENLVQEYRAAQAQLSEAKERYQQGNGGVTERTRLLSEVMEELEKVKQEMEEKGSSMTDGAPLVKIKQSLTKLKQETVEMDIRIGIVEHTLLQSKLKEKSNMTRNMHATVIPEPATGFY</sequence>
<name>IFT57_HUMAN</name>
<gene>
    <name type="primary">IFT57</name>
    <name type="synonym">DERP8</name>
    <name type="synonym">ESRRBL1</name>
    <name type="synonym">HIPPI</name>
</gene>
<keyword id="KW-0053">Apoptosis</keyword>
<keyword id="KW-0966">Cell projection</keyword>
<keyword id="KW-1186">Ciliopathy</keyword>
<keyword id="KW-0969">Cilium</keyword>
<keyword id="KW-0175">Coiled coil</keyword>
<keyword id="KW-0963">Cytoplasm</keyword>
<keyword id="KW-0206">Cytoskeleton</keyword>
<keyword id="KW-0238">DNA-binding</keyword>
<keyword id="KW-1267">Proteomics identification</keyword>
<keyword id="KW-1185">Reference proteome</keyword>
<keyword id="KW-0804">Transcription</keyword>
<keyword id="KW-0805">Transcription regulation</keyword>
<organism>
    <name type="scientific">Homo sapiens</name>
    <name type="common">Human</name>
    <dbReference type="NCBI Taxonomy" id="9606"/>
    <lineage>
        <taxon>Eukaryota</taxon>
        <taxon>Metazoa</taxon>
        <taxon>Chordata</taxon>
        <taxon>Craniata</taxon>
        <taxon>Vertebrata</taxon>
        <taxon>Euteleostomi</taxon>
        <taxon>Mammalia</taxon>
        <taxon>Eutheria</taxon>
        <taxon>Euarchontoglires</taxon>
        <taxon>Primates</taxon>
        <taxon>Haplorrhini</taxon>
        <taxon>Catarrhini</taxon>
        <taxon>Hominidae</taxon>
        <taxon>Homo</taxon>
    </lineage>
</organism>
<proteinExistence type="evidence at protein level"/>